<reference key="1">
    <citation type="journal article" date="2006" name="PLoS Genet.">
        <title>The complete genome sequence and comparative genome analysis of the high pathogenicity Yersinia enterocolitica strain 8081.</title>
        <authorList>
            <person name="Thomson N.R."/>
            <person name="Howard S."/>
            <person name="Wren B.W."/>
            <person name="Holden M.T.G."/>
            <person name="Crossman L."/>
            <person name="Challis G.L."/>
            <person name="Churcher C."/>
            <person name="Mungall K."/>
            <person name="Brooks K."/>
            <person name="Chillingworth T."/>
            <person name="Feltwell T."/>
            <person name="Abdellah Z."/>
            <person name="Hauser H."/>
            <person name="Jagels K."/>
            <person name="Maddison M."/>
            <person name="Moule S."/>
            <person name="Sanders M."/>
            <person name="Whitehead S."/>
            <person name="Quail M.A."/>
            <person name="Dougan G."/>
            <person name="Parkhill J."/>
            <person name="Prentice M.B."/>
        </authorList>
    </citation>
    <scope>NUCLEOTIDE SEQUENCE [LARGE SCALE GENOMIC DNA]</scope>
    <source>
        <strain>NCTC 13174 / 8081</strain>
    </source>
</reference>
<protein>
    <recommendedName>
        <fullName evidence="1">Tryptophan synthase beta chain</fullName>
        <ecNumber evidence="1">4.2.1.20</ecNumber>
    </recommendedName>
</protein>
<accession>A1JPX6</accession>
<evidence type="ECO:0000255" key="1">
    <source>
        <dbReference type="HAMAP-Rule" id="MF_00133"/>
    </source>
</evidence>
<proteinExistence type="inferred from homology"/>
<sequence length="396" mass="42650">MTTLNPYFGEFGGMYVPQILMPALKQLEEAFVSAQLDPEFQAEFQDLLKNYAGRPTALTLCQNLTKGTKTKLYLKREDLLHGGAHKTNQVLGQALLAKRMGKTEIIAETGAGQHGVASALACALLGLKCRIYMGAKDIERQSPNVFRMRLMGAEVIPVHSGSSTLKDACNEALRDWSGSYETAHYMLGTAAGPHPYPTIVREFQRMIGEETKAQMLAREGRLPDAVLACIGGGSNAIGMFADFIDEPGVGLIGVEPAGLGIETGQHGAPLKHGKVGIYFGMKSPMMQTSDGQIEESYSISAGLDFPSVGPQHAYLNSIGRADYVSVTDDEALDAFKALSCNEGIIPALESSHALAHALKMIKAEPEKEQILVVNLSGRGDKDIFTVHDILKARGEI</sequence>
<name>TRPB_YERE8</name>
<organism>
    <name type="scientific">Yersinia enterocolitica serotype O:8 / biotype 1B (strain NCTC 13174 / 8081)</name>
    <dbReference type="NCBI Taxonomy" id="393305"/>
    <lineage>
        <taxon>Bacteria</taxon>
        <taxon>Pseudomonadati</taxon>
        <taxon>Pseudomonadota</taxon>
        <taxon>Gammaproteobacteria</taxon>
        <taxon>Enterobacterales</taxon>
        <taxon>Yersiniaceae</taxon>
        <taxon>Yersinia</taxon>
    </lineage>
</organism>
<feature type="chain" id="PRO_1000018424" description="Tryptophan synthase beta chain">
    <location>
        <begin position="1"/>
        <end position="396"/>
    </location>
</feature>
<feature type="modified residue" description="N6-(pyridoxal phosphate)lysine" evidence="1">
    <location>
        <position position="86"/>
    </location>
</feature>
<dbReference type="EC" id="4.2.1.20" evidence="1"/>
<dbReference type="EMBL" id="AM286415">
    <property type="protein sequence ID" value="CAL12281.1"/>
    <property type="molecule type" value="Genomic_DNA"/>
</dbReference>
<dbReference type="RefSeq" id="WP_011816411.1">
    <property type="nucleotide sequence ID" value="NC_008800.1"/>
</dbReference>
<dbReference type="RefSeq" id="YP_001006451.1">
    <property type="nucleotide sequence ID" value="NC_008800.1"/>
</dbReference>
<dbReference type="SMR" id="A1JPX6"/>
<dbReference type="KEGG" id="yen:YE2213"/>
<dbReference type="PATRIC" id="fig|393305.7.peg.2378"/>
<dbReference type="eggNOG" id="COG0133">
    <property type="taxonomic scope" value="Bacteria"/>
</dbReference>
<dbReference type="HOGENOM" id="CLU_016734_3_1_6"/>
<dbReference type="OrthoDB" id="9766131at2"/>
<dbReference type="UniPathway" id="UPA00035">
    <property type="reaction ID" value="UER00044"/>
</dbReference>
<dbReference type="Proteomes" id="UP000000642">
    <property type="component" value="Chromosome"/>
</dbReference>
<dbReference type="GO" id="GO:0005737">
    <property type="term" value="C:cytoplasm"/>
    <property type="evidence" value="ECO:0007669"/>
    <property type="project" value="TreeGrafter"/>
</dbReference>
<dbReference type="GO" id="GO:0004834">
    <property type="term" value="F:tryptophan synthase activity"/>
    <property type="evidence" value="ECO:0007669"/>
    <property type="project" value="UniProtKB-UniRule"/>
</dbReference>
<dbReference type="CDD" id="cd06446">
    <property type="entry name" value="Trp-synth_B"/>
    <property type="match status" value="1"/>
</dbReference>
<dbReference type="FunFam" id="3.40.50.1100:FF:000001">
    <property type="entry name" value="Tryptophan synthase beta chain"/>
    <property type="match status" value="1"/>
</dbReference>
<dbReference type="FunFam" id="3.40.50.1100:FF:000004">
    <property type="entry name" value="Tryptophan synthase beta chain"/>
    <property type="match status" value="1"/>
</dbReference>
<dbReference type="Gene3D" id="3.40.50.1100">
    <property type="match status" value="2"/>
</dbReference>
<dbReference type="HAMAP" id="MF_00133">
    <property type="entry name" value="Trp_synth_beta"/>
    <property type="match status" value="1"/>
</dbReference>
<dbReference type="InterPro" id="IPR006653">
    <property type="entry name" value="Trp_synth_b_CS"/>
</dbReference>
<dbReference type="InterPro" id="IPR006654">
    <property type="entry name" value="Trp_synth_beta"/>
</dbReference>
<dbReference type="InterPro" id="IPR023026">
    <property type="entry name" value="Trp_synth_beta/beta-like"/>
</dbReference>
<dbReference type="InterPro" id="IPR001926">
    <property type="entry name" value="TrpB-like_PALP"/>
</dbReference>
<dbReference type="InterPro" id="IPR036052">
    <property type="entry name" value="TrpB-like_PALP_sf"/>
</dbReference>
<dbReference type="NCBIfam" id="TIGR00263">
    <property type="entry name" value="trpB"/>
    <property type="match status" value="1"/>
</dbReference>
<dbReference type="PANTHER" id="PTHR48077:SF3">
    <property type="entry name" value="TRYPTOPHAN SYNTHASE"/>
    <property type="match status" value="1"/>
</dbReference>
<dbReference type="PANTHER" id="PTHR48077">
    <property type="entry name" value="TRYPTOPHAN SYNTHASE-RELATED"/>
    <property type="match status" value="1"/>
</dbReference>
<dbReference type="Pfam" id="PF00291">
    <property type="entry name" value="PALP"/>
    <property type="match status" value="1"/>
</dbReference>
<dbReference type="PIRSF" id="PIRSF001413">
    <property type="entry name" value="Trp_syn_beta"/>
    <property type="match status" value="1"/>
</dbReference>
<dbReference type="SUPFAM" id="SSF53686">
    <property type="entry name" value="Tryptophan synthase beta subunit-like PLP-dependent enzymes"/>
    <property type="match status" value="1"/>
</dbReference>
<dbReference type="PROSITE" id="PS00168">
    <property type="entry name" value="TRP_SYNTHASE_BETA"/>
    <property type="match status" value="1"/>
</dbReference>
<comment type="function">
    <text evidence="1">The beta subunit is responsible for the synthesis of L-tryptophan from indole and L-serine.</text>
</comment>
<comment type="catalytic activity">
    <reaction evidence="1">
        <text>(1S,2R)-1-C-(indol-3-yl)glycerol 3-phosphate + L-serine = D-glyceraldehyde 3-phosphate + L-tryptophan + H2O</text>
        <dbReference type="Rhea" id="RHEA:10532"/>
        <dbReference type="ChEBI" id="CHEBI:15377"/>
        <dbReference type="ChEBI" id="CHEBI:33384"/>
        <dbReference type="ChEBI" id="CHEBI:57912"/>
        <dbReference type="ChEBI" id="CHEBI:58866"/>
        <dbReference type="ChEBI" id="CHEBI:59776"/>
        <dbReference type="EC" id="4.2.1.20"/>
    </reaction>
</comment>
<comment type="cofactor">
    <cofactor evidence="1">
        <name>pyridoxal 5'-phosphate</name>
        <dbReference type="ChEBI" id="CHEBI:597326"/>
    </cofactor>
</comment>
<comment type="pathway">
    <text evidence="1">Amino-acid biosynthesis; L-tryptophan biosynthesis; L-tryptophan from chorismate: step 5/5.</text>
</comment>
<comment type="subunit">
    <text evidence="1">Tetramer of two alpha and two beta chains.</text>
</comment>
<comment type="similarity">
    <text evidence="1">Belongs to the TrpB family.</text>
</comment>
<keyword id="KW-0028">Amino-acid biosynthesis</keyword>
<keyword id="KW-0057">Aromatic amino acid biosynthesis</keyword>
<keyword id="KW-0456">Lyase</keyword>
<keyword id="KW-0663">Pyridoxal phosphate</keyword>
<keyword id="KW-0822">Tryptophan biosynthesis</keyword>
<gene>
    <name evidence="1" type="primary">trpB</name>
    <name type="ordered locus">YE2213</name>
</gene>